<evidence type="ECO:0000255" key="1">
    <source>
        <dbReference type="HAMAP-Rule" id="MF_01007"/>
    </source>
</evidence>
<reference key="1">
    <citation type="journal article" date="2004" name="Proc. Natl. Acad. Sci. U.S.A.">
        <title>The louse-borne human pathogen Bartonella quintana is a genomic derivative of the zoonotic agent Bartonella henselae.</title>
        <authorList>
            <person name="Alsmark U.C.M."/>
            <person name="Frank A.C."/>
            <person name="Karlberg E.O."/>
            <person name="Legault B.-A."/>
            <person name="Ardell D.H."/>
            <person name="Canbaeck B."/>
            <person name="Eriksson A.-S."/>
            <person name="Naeslund A.K."/>
            <person name="Handley S.A."/>
            <person name="Huvet M."/>
            <person name="La Scola B."/>
            <person name="Holmberg M."/>
            <person name="Andersson S.G.E."/>
        </authorList>
    </citation>
    <scope>NUCLEOTIDE SEQUENCE [LARGE SCALE GENOMIC DNA]</scope>
    <source>
        <strain>Toulouse</strain>
    </source>
</reference>
<protein>
    <recommendedName>
        <fullName evidence="1">Ribosomal RNA small subunit methyltransferase H</fullName>
        <ecNumber evidence="1">2.1.1.199</ecNumber>
    </recommendedName>
    <alternativeName>
        <fullName evidence="1">16S rRNA m(4)C1402 methyltransferase</fullName>
    </alternativeName>
    <alternativeName>
        <fullName evidence="1">rRNA (cytosine-N(4)-)-methyltransferase RsmH</fullName>
    </alternativeName>
</protein>
<name>RSMH_BARQU</name>
<accession>Q6G116</accession>
<comment type="function">
    <text evidence="1">Specifically methylates the N4 position of cytidine in position 1402 (C1402) of 16S rRNA.</text>
</comment>
<comment type="catalytic activity">
    <reaction evidence="1">
        <text>cytidine(1402) in 16S rRNA + S-adenosyl-L-methionine = N(4)-methylcytidine(1402) in 16S rRNA + S-adenosyl-L-homocysteine + H(+)</text>
        <dbReference type="Rhea" id="RHEA:42928"/>
        <dbReference type="Rhea" id="RHEA-COMP:10286"/>
        <dbReference type="Rhea" id="RHEA-COMP:10287"/>
        <dbReference type="ChEBI" id="CHEBI:15378"/>
        <dbReference type="ChEBI" id="CHEBI:57856"/>
        <dbReference type="ChEBI" id="CHEBI:59789"/>
        <dbReference type="ChEBI" id="CHEBI:74506"/>
        <dbReference type="ChEBI" id="CHEBI:82748"/>
        <dbReference type="EC" id="2.1.1.199"/>
    </reaction>
</comment>
<comment type="subcellular location">
    <subcellularLocation>
        <location evidence="1">Cytoplasm</location>
    </subcellularLocation>
</comment>
<comment type="similarity">
    <text evidence="1">Belongs to the methyltransferase superfamily. RsmH family.</text>
</comment>
<keyword id="KW-0963">Cytoplasm</keyword>
<keyword id="KW-0489">Methyltransferase</keyword>
<keyword id="KW-0698">rRNA processing</keyword>
<keyword id="KW-0949">S-adenosyl-L-methionine</keyword>
<keyword id="KW-0808">Transferase</keyword>
<organism>
    <name type="scientific">Bartonella quintana (strain Toulouse)</name>
    <name type="common">Rochalimaea quintana</name>
    <dbReference type="NCBI Taxonomy" id="283165"/>
    <lineage>
        <taxon>Bacteria</taxon>
        <taxon>Pseudomonadati</taxon>
        <taxon>Pseudomonadota</taxon>
        <taxon>Alphaproteobacteria</taxon>
        <taxon>Hyphomicrobiales</taxon>
        <taxon>Bartonellaceae</taxon>
        <taxon>Bartonella</taxon>
    </lineage>
</organism>
<feature type="chain" id="PRO_0000108581" description="Ribosomal RNA small subunit methyltransferase H">
    <location>
        <begin position="1"/>
        <end position="332"/>
    </location>
</feature>
<feature type="binding site" evidence="1">
    <location>
        <begin position="39"/>
        <end position="41"/>
    </location>
    <ligand>
        <name>S-adenosyl-L-methionine</name>
        <dbReference type="ChEBI" id="CHEBI:59789"/>
    </ligand>
</feature>
<feature type="binding site" evidence="1">
    <location>
        <position position="56"/>
    </location>
    <ligand>
        <name>S-adenosyl-L-methionine</name>
        <dbReference type="ChEBI" id="CHEBI:59789"/>
    </ligand>
</feature>
<feature type="binding site" evidence="1">
    <location>
        <position position="83"/>
    </location>
    <ligand>
        <name>S-adenosyl-L-methionine</name>
        <dbReference type="ChEBI" id="CHEBI:59789"/>
    </ligand>
</feature>
<feature type="binding site" evidence="1">
    <location>
        <position position="100"/>
    </location>
    <ligand>
        <name>S-adenosyl-L-methionine</name>
        <dbReference type="ChEBI" id="CHEBI:59789"/>
    </ligand>
</feature>
<feature type="binding site" evidence="1">
    <location>
        <position position="107"/>
    </location>
    <ligand>
        <name>S-adenosyl-L-methionine</name>
        <dbReference type="ChEBI" id="CHEBI:59789"/>
    </ligand>
</feature>
<gene>
    <name evidence="1" type="primary">rsmH</name>
    <name type="synonym">mraW</name>
    <name type="ordered locus">BQ08940</name>
</gene>
<sequence length="332" mass="36936">MTKPGNKAERHIPVLLQPVLAGLMPLIGAKVIDGTFGAGGYTRALLNAGAQVIALDRDPHAVREGQSLVDEFFPRLRLMQMEFSQLDRVVEEKVDAVILDIGVSSMQFDEAERGFSFQKDGPLDMRMAQTGFTAGDVVNRLKKDDLARIFKILGEERYAGRIARMIEKRRCVQPFLRTGDLAHAIEALVGRKPGDRIHPATRVFQALRIYVNDEIGELARGLFAAESVLKPGGRLGVVSFHSLEDRMVKRFFSARSGGCRRSRYLPEIEAVPATFFSLFKGAITASKEELQQNPRSRSARLRIGIRTEAECLAKDIKLFDFAEIASFEGSKK</sequence>
<proteinExistence type="inferred from homology"/>
<dbReference type="EC" id="2.1.1.199" evidence="1"/>
<dbReference type="EMBL" id="BX897700">
    <property type="protein sequence ID" value="CAF26373.1"/>
    <property type="molecule type" value="Genomic_DNA"/>
</dbReference>
<dbReference type="RefSeq" id="WP_011179611.1">
    <property type="nucleotide sequence ID" value="NC_005955.1"/>
</dbReference>
<dbReference type="SMR" id="Q6G116"/>
<dbReference type="KEGG" id="bqu:BQ08940"/>
<dbReference type="eggNOG" id="COG0275">
    <property type="taxonomic scope" value="Bacteria"/>
</dbReference>
<dbReference type="HOGENOM" id="CLU_038422_1_1_5"/>
<dbReference type="OrthoDB" id="9806637at2"/>
<dbReference type="Proteomes" id="UP000000597">
    <property type="component" value="Chromosome"/>
</dbReference>
<dbReference type="GO" id="GO:0005737">
    <property type="term" value="C:cytoplasm"/>
    <property type="evidence" value="ECO:0007669"/>
    <property type="project" value="UniProtKB-SubCell"/>
</dbReference>
<dbReference type="GO" id="GO:0071424">
    <property type="term" value="F:rRNA (cytosine-N4-)-methyltransferase activity"/>
    <property type="evidence" value="ECO:0007669"/>
    <property type="project" value="UniProtKB-UniRule"/>
</dbReference>
<dbReference type="GO" id="GO:0070475">
    <property type="term" value="P:rRNA base methylation"/>
    <property type="evidence" value="ECO:0007669"/>
    <property type="project" value="UniProtKB-UniRule"/>
</dbReference>
<dbReference type="CDD" id="cd02440">
    <property type="entry name" value="AdoMet_MTases"/>
    <property type="match status" value="1"/>
</dbReference>
<dbReference type="Gene3D" id="1.10.150.170">
    <property type="entry name" value="Putative methyltransferase TM0872, insert domain"/>
    <property type="match status" value="1"/>
</dbReference>
<dbReference type="Gene3D" id="3.40.50.150">
    <property type="entry name" value="Vaccinia Virus protein VP39"/>
    <property type="match status" value="1"/>
</dbReference>
<dbReference type="HAMAP" id="MF_01007">
    <property type="entry name" value="16SrRNA_methyltr_H"/>
    <property type="match status" value="1"/>
</dbReference>
<dbReference type="InterPro" id="IPR002903">
    <property type="entry name" value="RsmH"/>
</dbReference>
<dbReference type="InterPro" id="IPR023397">
    <property type="entry name" value="SAM-dep_MeTrfase_MraW_recog"/>
</dbReference>
<dbReference type="InterPro" id="IPR029063">
    <property type="entry name" value="SAM-dependent_MTases_sf"/>
</dbReference>
<dbReference type="NCBIfam" id="TIGR00006">
    <property type="entry name" value="16S rRNA (cytosine(1402)-N(4))-methyltransferase RsmH"/>
    <property type="match status" value="1"/>
</dbReference>
<dbReference type="PANTHER" id="PTHR11265:SF0">
    <property type="entry name" value="12S RRNA N4-METHYLCYTIDINE METHYLTRANSFERASE"/>
    <property type="match status" value="1"/>
</dbReference>
<dbReference type="PANTHER" id="PTHR11265">
    <property type="entry name" value="S-ADENOSYL-METHYLTRANSFERASE MRAW"/>
    <property type="match status" value="1"/>
</dbReference>
<dbReference type="Pfam" id="PF01795">
    <property type="entry name" value="Methyltransf_5"/>
    <property type="match status" value="1"/>
</dbReference>
<dbReference type="PIRSF" id="PIRSF004486">
    <property type="entry name" value="MraW"/>
    <property type="match status" value="1"/>
</dbReference>
<dbReference type="SUPFAM" id="SSF81799">
    <property type="entry name" value="Putative methyltransferase TM0872, insert domain"/>
    <property type="match status" value="1"/>
</dbReference>
<dbReference type="SUPFAM" id="SSF53335">
    <property type="entry name" value="S-adenosyl-L-methionine-dependent methyltransferases"/>
    <property type="match status" value="1"/>
</dbReference>